<comment type="catalytic activity">
    <reaction evidence="1">
        <text>tRNA(Asn) + L-asparagine + ATP = L-asparaginyl-tRNA(Asn) + AMP + diphosphate + H(+)</text>
        <dbReference type="Rhea" id="RHEA:11180"/>
        <dbReference type="Rhea" id="RHEA-COMP:9659"/>
        <dbReference type="Rhea" id="RHEA-COMP:9674"/>
        <dbReference type="ChEBI" id="CHEBI:15378"/>
        <dbReference type="ChEBI" id="CHEBI:30616"/>
        <dbReference type="ChEBI" id="CHEBI:33019"/>
        <dbReference type="ChEBI" id="CHEBI:58048"/>
        <dbReference type="ChEBI" id="CHEBI:78442"/>
        <dbReference type="ChEBI" id="CHEBI:78515"/>
        <dbReference type="ChEBI" id="CHEBI:456215"/>
        <dbReference type="EC" id="6.1.1.22"/>
    </reaction>
</comment>
<comment type="subunit">
    <text evidence="1">Homodimer.</text>
</comment>
<comment type="subcellular location">
    <subcellularLocation>
        <location evidence="1">Cytoplasm</location>
    </subcellularLocation>
</comment>
<comment type="similarity">
    <text evidence="1">Belongs to the class-II aminoacyl-tRNA synthetase family.</text>
</comment>
<sequence length="454" mass="51732">MDIKFLYDNHETLKEQKVTIIGRVRSNRQGKAVSFMVLNDGTVLNDLQVVYKPETFGFEQGSKARVSSIVEIEGILIPTPTRPQPFEINATSITLLDQAIEEYPLQKKEHSPEFLREISHLRARTKTFQAIFRIRSTAAFAIHKFFQENNYVYVTTPIITSNDAEGAGEQFVVTVNEDKDYANDFFGKKASLTVSGQLNGEAFAQAFKNIYTFGPTFRAENSHTTKHASEFWMIEPEVAFADINDNIQLMQDMLKSVVGYVLEKNMTELEFLQEQLEPGLIDKITGIVNVEFKVNTYEEVLKTLQDAIDKGHKFEENNIHFGLDLGTEHERFICEEVNKCPTFVINYPKDIKSFYMKQNDDGKTVAAVDLLVPGIGELCGGSEREANLDKILERCEFYGINPEELDWYIGLRKYGFYKSAGFGLGFERLIMYITGASNIRDVIPFPRTPKTLLY</sequence>
<gene>
    <name evidence="1" type="primary">asnS</name>
    <name type="ordered locus">Mfl480</name>
</gene>
<feature type="chain" id="PRO_0000176426" description="Asparagine--tRNA ligase">
    <location>
        <begin position="1"/>
        <end position="454"/>
    </location>
</feature>
<keyword id="KW-0030">Aminoacyl-tRNA synthetase</keyword>
<keyword id="KW-0067">ATP-binding</keyword>
<keyword id="KW-0963">Cytoplasm</keyword>
<keyword id="KW-0436">Ligase</keyword>
<keyword id="KW-0547">Nucleotide-binding</keyword>
<keyword id="KW-0648">Protein biosynthesis</keyword>
<keyword id="KW-1185">Reference proteome</keyword>
<proteinExistence type="inferred from homology"/>
<protein>
    <recommendedName>
        <fullName evidence="1">Asparagine--tRNA ligase</fullName>
        <ecNumber evidence="1">6.1.1.22</ecNumber>
    </recommendedName>
    <alternativeName>
        <fullName evidence="1">Asparaginyl-tRNA synthetase</fullName>
        <shortName evidence="1">AsnRS</shortName>
    </alternativeName>
</protein>
<name>SYN_MESFL</name>
<reference key="1">
    <citation type="submission" date="2004-06" db="EMBL/GenBank/DDBJ databases">
        <authorList>
            <person name="Birren B.W."/>
            <person name="Stange-Thomann N."/>
            <person name="Hafez N."/>
            <person name="DeCaprio D."/>
            <person name="Fisher S."/>
            <person name="Butler J."/>
            <person name="Elkins T."/>
            <person name="Kodira C.D."/>
            <person name="Major J."/>
            <person name="Wang S."/>
            <person name="Nicol R."/>
            <person name="Nusbaum C."/>
        </authorList>
    </citation>
    <scope>NUCLEOTIDE SEQUENCE [LARGE SCALE GENOMIC DNA]</scope>
    <source>
        <strain>ATCC 33453 / NBRC 100688 / NCTC 11704 / L1</strain>
    </source>
</reference>
<accession>Q6F0Y5</accession>
<organism>
    <name type="scientific">Mesoplasma florum (strain ATCC 33453 / NBRC 100688 / NCTC 11704 / L1)</name>
    <name type="common">Acholeplasma florum</name>
    <dbReference type="NCBI Taxonomy" id="265311"/>
    <lineage>
        <taxon>Bacteria</taxon>
        <taxon>Bacillati</taxon>
        <taxon>Mycoplasmatota</taxon>
        <taxon>Mollicutes</taxon>
        <taxon>Entomoplasmatales</taxon>
        <taxon>Entomoplasmataceae</taxon>
        <taxon>Mesoplasma</taxon>
    </lineage>
</organism>
<evidence type="ECO:0000255" key="1">
    <source>
        <dbReference type="HAMAP-Rule" id="MF_00534"/>
    </source>
</evidence>
<dbReference type="EC" id="6.1.1.22" evidence="1"/>
<dbReference type="EMBL" id="AE017263">
    <property type="protein sequence ID" value="AAT75838.1"/>
    <property type="molecule type" value="Genomic_DNA"/>
</dbReference>
<dbReference type="RefSeq" id="WP_011183378.1">
    <property type="nucleotide sequence ID" value="NC_006055.1"/>
</dbReference>
<dbReference type="RefSeq" id="YP_053722.1">
    <property type="nucleotide sequence ID" value="NC_006055.1"/>
</dbReference>
<dbReference type="SMR" id="Q6F0Y5"/>
<dbReference type="STRING" id="265311.Mfl480"/>
<dbReference type="PaxDb" id="265311-Mfl480"/>
<dbReference type="EnsemblBacteria" id="AAT75838">
    <property type="protein sequence ID" value="AAT75838"/>
    <property type="gene ID" value="Mfl480"/>
</dbReference>
<dbReference type="GeneID" id="2897653"/>
<dbReference type="KEGG" id="mfl:Mfl480"/>
<dbReference type="PATRIC" id="fig|265311.5.peg.486"/>
<dbReference type="eggNOG" id="COG0017">
    <property type="taxonomic scope" value="Bacteria"/>
</dbReference>
<dbReference type="HOGENOM" id="CLU_004553_2_0_14"/>
<dbReference type="OrthoDB" id="9762036at2"/>
<dbReference type="Proteomes" id="UP000006647">
    <property type="component" value="Chromosome"/>
</dbReference>
<dbReference type="GO" id="GO:0005737">
    <property type="term" value="C:cytoplasm"/>
    <property type="evidence" value="ECO:0007669"/>
    <property type="project" value="UniProtKB-SubCell"/>
</dbReference>
<dbReference type="GO" id="GO:0004816">
    <property type="term" value="F:asparagine-tRNA ligase activity"/>
    <property type="evidence" value="ECO:0007669"/>
    <property type="project" value="UniProtKB-UniRule"/>
</dbReference>
<dbReference type="GO" id="GO:0005524">
    <property type="term" value="F:ATP binding"/>
    <property type="evidence" value="ECO:0007669"/>
    <property type="project" value="UniProtKB-UniRule"/>
</dbReference>
<dbReference type="GO" id="GO:0003676">
    <property type="term" value="F:nucleic acid binding"/>
    <property type="evidence" value="ECO:0007669"/>
    <property type="project" value="InterPro"/>
</dbReference>
<dbReference type="GO" id="GO:0006421">
    <property type="term" value="P:asparaginyl-tRNA aminoacylation"/>
    <property type="evidence" value="ECO:0007669"/>
    <property type="project" value="UniProtKB-UniRule"/>
</dbReference>
<dbReference type="CDD" id="cd00776">
    <property type="entry name" value="AsxRS_core"/>
    <property type="match status" value="1"/>
</dbReference>
<dbReference type="CDD" id="cd04318">
    <property type="entry name" value="EcAsnRS_like_N"/>
    <property type="match status" value="1"/>
</dbReference>
<dbReference type="FunFam" id="3.30.930.10:FF:000016">
    <property type="entry name" value="Asparagine--tRNA ligase"/>
    <property type="match status" value="1"/>
</dbReference>
<dbReference type="Gene3D" id="3.30.930.10">
    <property type="entry name" value="Bira Bifunctional Protein, Domain 2"/>
    <property type="match status" value="1"/>
</dbReference>
<dbReference type="Gene3D" id="2.40.50.140">
    <property type="entry name" value="Nucleic acid-binding proteins"/>
    <property type="match status" value="1"/>
</dbReference>
<dbReference type="HAMAP" id="MF_00534">
    <property type="entry name" value="Asn_tRNA_synth"/>
    <property type="match status" value="1"/>
</dbReference>
<dbReference type="InterPro" id="IPR004364">
    <property type="entry name" value="Aa-tRNA-synt_II"/>
</dbReference>
<dbReference type="InterPro" id="IPR006195">
    <property type="entry name" value="aa-tRNA-synth_II"/>
</dbReference>
<dbReference type="InterPro" id="IPR045864">
    <property type="entry name" value="aa-tRNA-synth_II/BPL/LPL"/>
</dbReference>
<dbReference type="InterPro" id="IPR004522">
    <property type="entry name" value="Asn-tRNA-ligase"/>
</dbReference>
<dbReference type="InterPro" id="IPR002312">
    <property type="entry name" value="Asp/Asn-tRNA-synth_IIb"/>
</dbReference>
<dbReference type="InterPro" id="IPR012340">
    <property type="entry name" value="NA-bd_OB-fold"/>
</dbReference>
<dbReference type="InterPro" id="IPR004365">
    <property type="entry name" value="NA-bd_OB_tRNA"/>
</dbReference>
<dbReference type="NCBIfam" id="TIGR00457">
    <property type="entry name" value="asnS"/>
    <property type="match status" value="1"/>
</dbReference>
<dbReference type="NCBIfam" id="NF003037">
    <property type="entry name" value="PRK03932.1"/>
    <property type="match status" value="1"/>
</dbReference>
<dbReference type="PANTHER" id="PTHR22594:SF34">
    <property type="entry name" value="ASPARAGINE--TRNA LIGASE, MITOCHONDRIAL-RELATED"/>
    <property type="match status" value="1"/>
</dbReference>
<dbReference type="PANTHER" id="PTHR22594">
    <property type="entry name" value="ASPARTYL/LYSYL-TRNA SYNTHETASE"/>
    <property type="match status" value="1"/>
</dbReference>
<dbReference type="Pfam" id="PF00152">
    <property type="entry name" value="tRNA-synt_2"/>
    <property type="match status" value="1"/>
</dbReference>
<dbReference type="Pfam" id="PF01336">
    <property type="entry name" value="tRNA_anti-codon"/>
    <property type="match status" value="1"/>
</dbReference>
<dbReference type="PRINTS" id="PR01042">
    <property type="entry name" value="TRNASYNTHASP"/>
</dbReference>
<dbReference type="SUPFAM" id="SSF55681">
    <property type="entry name" value="Class II aaRS and biotin synthetases"/>
    <property type="match status" value="1"/>
</dbReference>
<dbReference type="SUPFAM" id="SSF50249">
    <property type="entry name" value="Nucleic acid-binding proteins"/>
    <property type="match status" value="1"/>
</dbReference>
<dbReference type="PROSITE" id="PS50862">
    <property type="entry name" value="AA_TRNA_LIGASE_II"/>
    <property type="match status" value="1"/>
</dbReference>